<proteinExistence type="inferred from homology"/>
<sequence length="800" mass="86487">MRKKRYVWLKSILVAILVFGSGVWINTSNGTNAQAATITQDTPINQIFTDAALAEKMKTVLGKTNVTDTVSQTDLDQVTTLQADRLGIKSIDGLEYLNNLTQINFSNNQLTDITPLKDLTKLVDILMNNNQIADITPLANLTNLTGLTLFNNQITDIDPLKNLTNLNRLELSSNTISDISALSGLTNLQQLSFGNQVTDLKPLANLTTLERLDISSNKVSDISVLAKLTNLESLIATNNQISDITPLGILTNLDELSLNGNQLKDIGTLASLTNLTDLDLANNQISNLAPLSGLTKLTELKLGANQISNISPLAGLTALTNLELNENQLEDISPISNLKNLTYLTLYFNNISDISPVSSLTKLQRLFFYNNKVSDVSSLANLTNINWLSAGHNQISDLTPLANLTRITQLGLNDQAWTNAPVNYKANVSIPNTVKNVTGALIAPATISDGGSYAEPDITWNLPSYTNEVSYTFSQPVTIGKGTTTFSGTVTQPLKAIFNAKFHVDGKETTKEVEAGNLLTEPAKPVKEGHTFVGWFDAQTGGTKWNFSTDKMPTNDINLYAQFSINSYTATFENDGVTTSQTVDYQGLLQEPTPPTKEGYTFKGWYDAKTGGDKWDFATSKMPAKNITLYAQYSANSYTATFDVDGKSTTQAVDYQGLLKEPKAPTKAGYTFKGWYDEKTDGKKWDFATDKMPANDITLYAQFTKNPVAPPTTGGNTPPTTNNGGNTTPPSANIPGSDTSNTSTGNSASTTSTMNAYDPYNSKEASLPTTGDSDNALYLLLGLLAVGTAMALTKKARASK</sequence>
<feature type="signal peptide" evidence="2">
    <location>
        <begin position="1"/>
        <end position="35"/>
    </location>
</feature>
<feature type="chain" id="PRO_0000418519" description="Internalin A">
    <location>
        <begin position="36"/>
        <end position="770"/>
    </location>
</feature>
<feature type="propeptide" id="PRO_0000418520" description="Removed by sortase A" evidence="1 3">
    <location>
        <begin position="771"/>
        <end position="800"/>
    </location>
</feature>
<feature type="domain" description="LRRNT">
    <location>
        <begin position="36"/>
        <end position="76"/>
    </location>
</feature>
<feature type="repeat" description="LRR 1">
    <location>
        <begin position="77"/>
        <end position="98"/>
    </location>
</feature>
<feature type="repeat" description="LRR 2">
    <location>
        <begin position="99"/>
        <end position="120"/>
    </location>
</feature>
<feature type="repeat" description="LRR 3">
    <location>
        <begin position="121"/>
        <end position="142"/>
    </location>
</feature>
<feature type="repeat" description="LRR 4">
    <location>
        <begin position="143"/>
        <end position="164"/>
    </location>
</feature>
<feature type="repeat" description="LRR 5">
    <location>
        <begin position="165"/>
        <end position="186"/>
    </location>
</feature>
<feature type="repeat" description="LRR 6">
    <location>
        <begin position="187"/>
        <end position="207"/>
    </location>
</feature>
<feature type="repeat" description="LRR 7">
    <location>
        <begin position="208"/>
        <end position="229"/>
    </location>
</feature>
<feature type="repeat" description="LRR 8">
    <location>
        <begin position="230"/>
        <end position="251"/>
    </location>
</feature>
<feature type="repeat" description="LRR 9">
    <location>
        <begin position="252"/>
        <end position="273"/>
    </location>
</feature>
<feature type="repeat" description="LRR 10">
    <location>
        <begin position="274"/>
        <end position="295"/>
    </location>
</feature>
<feature type="repeat" description="LRR 11">
    <location>
        <begin position="296"/>
        <end position="317"/>
    </location>
</feature>
<feature type="repeat" description="LRR 12">
    <location>
        <begin position="318"/>
        <end position="339"/>
    </location>
</feature>
<feature type="repeat" description="LRR 13">
    <location>
        <begin position="340"/>
        <end position="361"/>
    </location>
</feature>
<feature type="repeat" description="LRR 14">
    <location>
        <begin position="362"/>
        <end position="383"/>
    </location>
</feature>
<feature type="repeat" description="LRR 15">
    <location>
        <begin position="384"/>
        <end position="405"/>
    </location>
</feature>
<feature type="domain" description="LRRCT">
    <location>
        <begin position="416"/>
        <end position="505"/>
    </location>
</feature>
<feature type="repeat" description="B-1">
    <location>
        <begin position="518"/>
        <end position="587"/>
    </location>
</feature>
<feature type="repeat" description="B-2">
    <location>
        <begin position="588"/>
        <end position="657"/>
    </location>
</feature>
<feature type="repeat" description="B-3">
    <location>
        <begin position="658"/>
        <end position="706"/>
    </location>
</feature>
<feature type="region of interest" description="3 X approximate tandem repeats, type B">
    <location>
        <begin position="518"/>
        <end position="706"/>
    </location>
</feature>
<feature type="region of interest" description="Disordered" evidence="4">
    <location>
        <begin position="705"/>
        <end position="757"/>
    </location>
</feature>
<feature type="short sequence motif" description="LPXTG sorting signal" evidence="3">
    <location>
        <begin position="767"/>
        <end position="771"/>
    </location>
</feature>
<feature type="compositionally biased region" description="Low complexity" evidence="4">
    <location>
        <begin position="711"/>
        <end position="753"/>
    </location>
</feature>
<feature type="modified residue" description="Pentaglycyl murein peptidoglycan amidated threonine" evidence="3">
    <location>
        <position position="770"/>
    </location>
</feature>
<feature type="sequence conflict" description="In Ref. 1; AAZ53236." evidence="5" ref="1">
    <original>A</original>
    <variation>V</variation>
    <location>
        <position position="791"/>
    </location>
</feature>
<protein>
    <recommendedName>
        <fullName>Internalin A</fullName>
    </recommendedName>
</protein>
<evidence type="ECO:0000250" key="1">
    <source>
        <dbReference type="UniProtKB" id="P0DJM0"/>
    </source>
</evidence>
<evidence type="ECO:0000255" key="2"/>
<evidence type="ECO:0000255" key="3">
    <source>
        <dbReference type="PROSITE-ProRule" id="PRU00477"/>
    </source>
</evidence>
<evidence type="ECO:0000256" key="4">
    <source>
        <dbReference type="SAM" id="MobiDB-lite"/>
    </source>
</evidence>
<evidence type="ECO:0000305" key="5"/>
<comment type="function">
    <text evidence="1">Mediates the entry of Listeria monocytogenes into cells. Binds to host receptor cadherin-1 (E-cadherin, CDH1).</text>
</comment>
<comment type="subcellular location">
    <subcellularLocation>
        <location evidence="3">Secreted</location>
        <location evidence="3">Cell wall</location>
        <topology evidence="3">Peptidoglycan-anchor</topology>
    </subcellularLocation>
</comment>
<comment type="similarity">
    <text evidence="5">Belongs to the internalin family.</text>
</comment>
<gene>
    <name type="primary">inlA</name>
    <name type="ordered locus">LMRG_00126</name>
</gene>
<reference key="1">
    <citation type="submission" date="2005-07" db="EMBL/GenBank/DDBJ databases">
        <authorList>
            <person name="Jiang L."/>
            <person name="Xu J."/>
            <person name="Chen N."/>
            <person name="Chen X."/>
            <person name="Fang W."/>
        </authorList>
    </citation>
    <scope>NUCLEOTIDE SEQUENCE [GENOMIC DNA]</scope>
    <source>
        <strain>10403S</strain>
    </source>
</reference>
<reference key="2">
    <citation type="submission" date="2010-04" db="EMBL/GenBank/DDBJ databases">
        <title>The genome sequence of Listeria monocytogenes strain 10403S.</title>
        <authorList>
            <consortium name="The Broad Institute Genome Sequencing Platform"/>
            <consortium name="The Broad Institute Genome Sequencing Center for Infectious Disease"/>
            <person name="Borowsky M."/>
            <person name="Borodovsky M."/>
            <person name="Young S.K."/>
            <person name="Zeng Q."/>
            <person name="Koehrsen M."/>
            <person name="Fitzgerald M."/>
            <person name="Wiedmann M."/>
            <person name="Swaminathan B."/>
            <person name="Lauer P."/>
            <person name="Portnoy D."/>
            <person name="Cossart P."/>
            <person name="Buchrieser C."/>
            <person name="Higgins D."/>
            <person name="Abouelleil A."/>
            <person name="Alvarado L."/>
            <person name="Arachchi H.M."/>
            <person name="Berlin A."/>
            <person name="Borenstein D."/>
            <person name="Brown A."/>
            <person name="Chapman S.B."/>
            <person name="Chen Z."/>
            <person name="Dunbar C.D."/>
            <person name="Engels R."/>
            <person name="Freedman E."/>
            <person name="Gearin G."/>
            <person name="Gellesch M."/>
            <person name="Goldberg J."/>
            <person name="Griggs A."/>
            <person name="Gujja S."/>
            <person name="Heilman E."/>
            <person name="Heiman D."/>
            <person name="Howarth C."/>
            <person name="Jen D."/>
            <person name="Larson L."/>
            <person name="Lui A."/>
            <person name="MacDonald J."/>
            <person name="Mehta T."/>
            <person name="Montmayeur A."/>
            <person name="Neiman D."/>
            <person name="Park D."/>
            <person name="Pearson M."/>
            <person name="Priest M."/>
            <person name="Richards J."/>
            <person name="Roberts A."/>
            <person name="Saif S."/>
            <person name="Shea T."/>
            <person name="Shenoy N."/>
            <person name="Sisk P."/>
            <person name="Stolte C."/>
            <person name="Sykes S."/>
            <person name="Walk T."/>
            <person name="White J."/>
            <person name="Yandava C."/>
            <person name="Haas B."/>
            <person name="Nusbaum C."/>
            <person name="Birren B."/>
        </authorList>
    </citation>
    <scope>NUCLEOTIDE SEQUENCE [LARGE SCALE GENOMIC DNA]</scope>
    <source>
        <strain>10403S</strain>
    </source>
</reference>
<keyword id="KW-0134">Cell wall</keyword>
<keyword id="KW-0433">Leucine-rich repeat</keyword>
<keyword id="KW-0572">Peptidoglycan-anchor</keyword>
<keyword id="KW-0677">Repeat</keyword>
<keyword id="KW-0964">Secreted</keyword>
<keyword id="KW-0732">Signal</keyword>
<dbReference type="EMBL" id="DQ132795">
    <property type="protein sequence ID" value="AAZ53236.1"/>
    <property type="molecule type" value="Genomic_DNA"/>
</dbReference>
<dbReference type="EMBL" id="CP002002">
    <property type="protein sequence ID" value="AEO05444.1"/>
    <property type="molecule type" value="Genomic_DNA"/>
</dbReference>
<dbReference type="RefSeq" id="WP_014600515.1">
    <property type="nucleotide sequence ID" value="NC_017544.1"/>
</dbReference>
<dbReference type="SMR" id="G2K3G6"/>
<dbReference type="KEGG" id="lmt:LMRG_00126"/>
<dbReference type="HOGENOM" id="CLU_019447_3_0_9"/>
<dbReference type="PHI-base" id="PHI:11650"/>
<dbReference type="Proteomes" id="UP000001288">
    <property type="component" value="Chromosome"/>
</dbReference>
<dbReference type="GO" id="GO:0005576">
    <property type="term" value="C:extracellular region"/>
    <property type="evidence" value="ECO:0007669"/>
    <property type="project" value="UniProtKB-KW"/>
</dbReference>
<dbReference type="FunFam" id="3.80.10.10:FF:001164">
    <property type="entry name" value="GH01279p"/>
    <property type="match status" value="1"/>
</dbReference>
<dbReference type="FunFam" id="2.60.40.1220:FF:000002">
    <property type="entry name" value="Internalin A"/>
    <property type="match status" value="1"/>
</dbReference>
<dbReference type="FunFam" id="2.60.40.4270:FF:000001">
    <property type="entry name" value="Internalin A"/>
    <property type="match status" value="1"/>
</dbReference>
<dbReference type="Gene3D" id="2.60.40.1220">
    <property type="match status" value="1"/>
</dbReference>
<dbReference type="Gene3D" id="2.60.40.4270">
    <property type="entry name" value="Listeria-Bacteroides repeat domain"/>
    <property type="match status" value="3"/>
</dbReference>
<dbReference type="Gene3D" id="3.80.10.10">
    <property type="entry name" value="Ribonuclease Inhibitor"/>
    <property type="match status" value="1"/>
</dbReference>
<dbReference type="InterPro" id="IPR014755">
    <property type="entry name" value="Cu-Rt/internalin_Ig-like"/>
</dbReference>
<dbReference type="InterPro" id="IPR014756">
    <property type="entry name" value="Ig_E-set"/>
</dbReference>
<dbReference type="InterPro" id="IPR012569">
    <property type="entry name" value="Inl_IR"/>
</dbReference>
<dbReference type="InterPro" id="IPR047600">
    <property type="entry name" value="InlA"/>
</dbReference>
<dbReference type="InterPro" id="IPR013378">
    <property type="entry name" value="InlB-like_B-rpt"/>
</dbReference>
<dbReference type="InterPro" id="IPR024634">
    <property type="entry name" value="Internalin_N"/>
</dbReference>
<dbReference type="InterPro" id="IPR001611">
    <property type="entry name" value="Leu-rich_rpt"/>
</dbReference>
<dbReference type="InterPro" id="IPR025875">
    <property type="entry name" value="Leu-rich_rpt_4"/>
</dbReference>
<dbReference type="InterPro" id="IPR003591">
    <property type="entry name" value="Leu-rich_rpt_typical-subtyp"/>
</dbReference>
<dbReference type="InterPro" id="IPR042229">
    <property type="entry name" value="Listeria/Bacterioides_rpt_sf"/>
</dbReference>
<dbReference type="InterPro" id="IPR019931">
    <property type="entry name" value="LPXTG_anchor"/>
</dbReference>
<dbReference type="InterPro" id="IPR032675">
    <property type="entry name" value="LRR_dom_sf"/>
</dbReference>
<dbReference type="InterPro" id="IPR050836">
    <property type="entry name" value="SDS22/Internalin_LRR"/>
</dbReference>
<dbReference type="NCBIfam" id="NF033189">
    <property type="entry name" value="internalin_A"/>
    <property type="match status" value="1"/>
</dbReference>
<dbReference type="NCBIfam" id="TIGR02543">
    <property type="entry name" value="List_Bact_rpt"/>
    <property type="match status" value="3"/>
</dbReference>
<dbReference type="NCBIfam" id="TIGR01167">
    <property type="entry name" value="LPXTG_anchor"/>
    <property type="match status" value="1"/>
</dbReference>
<dbReference type="PANTHER" id="PTHR46652">
    <property type="entry name" value="LEUCINE-RICH REPEAT AND IQ DOMAIN-CONTAINING PROTEIN 1-RELATED"/>
    <property type="match status" value="1"/>
</dbReference>
<dbReference type="PANTHER" id="PTHR46652:SF3">
    <property type="entry name" value="LEUCINE-RICH REPEAT-CONTAINING PROTEIN 9"/>
    <property type="match status" value="1"/>
</dbReference>
<dbReference type="Pfam" id="PF09479">
    <property type="entry name" value="Flg_new"/>
    <property type="match status" value="3"/>
</dbReference>
<dbReference type="Pfam" id="PF00746">
    <property type="entry name" value="Gram_pos_anchor"/>
    <property type="match status" value="1"/>
</dbReference>
<dbReference type="Pfam" id="PF12354">
    <property type="entry name" value="Internalin_N"/>
    <property type="match status" value="1"/>
</dbReference>
<dbReference type="Pfam" id="PF12799">
    <property type="entry name" value="LRR_4"/>
    <property type="match status" value="6"/>
</dbReference>
<dbReference type="Pfam" id="PF08191">
    <property type="entry name" value="LRR_adjacent"/>
    <property type="match status" value="1"/>
</dbReference>
<dbReference type="SMART" id="SM00365">
    <property type="entry name" value="LRR_SD22"/>
    <property type="match status" value="15"/>
</dbReference>
<dbReference type="SMART" id="SM00369">
    <property type="entry name" value="LRR_TYP"/>
    <property type="match status" value="11"/>
</dbReference>
<dbReference type="SUPFAM" id="SSF81296">
    <property type="entry name" value="E set domains"/>
    <property type="match status" value="1"/>
</dbReference>
<dbReference type="SUPFAM" id="SSF52058">
    <property type="entry name" value="L domain-like"/>
    <property type="match status" value="1"/>
</dbReference>
<dbReference type="PROSITE" id="PS50847">
    <property type="entry name" value="GRAM_POS_ANCHORING"/>
    <property type="match status" value="1"/>
</dbReference>
<dbReference type="PROSITE" id="PS51450">
    <property type="entry name" value="LRR"/>
    <property type="match status" value="15"/>
</dbReference>
<name>INLA_LISM4</name>
<organism>
    <name type="scientific">Listeria monocytogenes serotype 1/2a (strain 10403S)</name>
    <dbReference type="NCBI Taxonomy" id="393133"/>
    <lineage>
        <taxon>Bacteria</taxon>
        <taxon>Bacillati</taxon>
        <taxon>Bacillota</taxon>
        <taxon>Bacilli</taxon>
        <taxon>Bacillales</taxon>
        <taxon>Listeriaceae</taxon>
        <taxon>Listeria</taxon>
    </lineage>
</organism>
<accession>G2K3G6</accession>
<accession>P25146</accession>
<accession>Q45GD5</accession>
<accession>Q45GD6</accession>
<accession>Q48748</accession>
<accession>Q48749</accession>
<accession>Q48750</accession>
<accession>Q48752</accession>
<accession>Q9EXG2</accession>